<protein>
    <recommendedName>
        <fullName>Rho GTPase-activating protein 20</fullName>
    </recommendedName>
    <alternativeName>
        <fullName>RA and RhoGAP domain-containing protein</fullName>
        <shortName>RARhoGAP</shortName>
    </alternativeName>
    <alternativeName>
        <fullName>Rho-type GTPase-activating protein 20</fullName>
    </alternativeName>
</protein>
<feature type="chain" id="PRO_0000283087" description="Rho GTPase-activating protein 20">
    <location>
        <begin position="1"/>
        <end position="1182"/>
    </location>
</feature>
<feature type="domain" description="PH">
    <location>
        <begin position="85"/>
        <end position="185"/>
    </location>
</feature>
<feature type="domain" description="Ras-associating" evidence="2">
    <location>
        <begin position="194"/>
        <end position="283"/>
    </location>
</feature>
<feature type="domain" description="Rho-GAP" evidence="3">
    <location>
        <begin position="365"/>
        <end position="551"/>
    </location>
</feature>
<feature type="region of interest" description="Disordered" evidence="4">
    <location>
        <begin position="1"/>
        <end position="40"/>
    </location>
</feature>
<feature type="region of interest" description="Disordered" evidence="4">
    <location>
        <begin position="745"/>
        <end position="772"/>
    </location>
</feature>
<feature type="region of interest" description="Disordered" evidence="4">
    <location>
        <begin position="803"/>
        <end position="839"/>
    </location>
</feature>
<feature type="region of interest" description="Disordered" evidence="4">
    <location>
        <begin position="935"/>
        <end position="955"/>
    </location>
</feature>
<feature type="region of interest" description="Disordered" evidence="4">
    <location>
        <begin position="982"/>
        <end position="1011"/>
    </location>
</feature>
<feature type="region of interest" description="Disordered" evidence="4">
    <location>
        <begin position="1074"/>
        <end position="1101"/>
    </location>
</feature>
<feature type="region of interest" description="Disordered" evidence="4">
    <location>
        <begin position="1142"/>
        <end position="1182"/>
    </location>
</feature>
<feature type="compositionally biased region" description="Polar residues" evidence="4">
    <location>
        <begin position="758"/>
        <end position="772"/>
    </location>
</feature>
<feature type="compositionally biased region" description="Basic and acidic residues" evidence="4">
    <location>
        <begin position="811"/>
        <end position="824"/>
    </location>
</feature>
<feature type="site" description="Arginine finger; crucial for GTP hydrolysis by stabilizing the transition state" evidence="3">
    <location>
        <position position="399"/>
    </location>
</feature>
<feature type="modified residue" description="Phosphoserine" evidence="6">
    <location>
        <position position="46"/>
    </location>
</feature>
<feature type="modified residue" description="Phosphoserine" evidence="6">
    <location>
        <position position="704"/>
    </location>
</feature>
<feature type="modified residue" description="Phosphoserine" evidence="6">
    <location>
        <position position="730"/>
    </location>
</feature>
<feature type="splice variant" id="VSP_024300" description="In isoform 2." evidence="5">
    <original>IALEKEKDYPKSIPLKIFAKDIGNCAYFKTITVM</original>
    <variation>VPVHTVLMLSLTCLNQTCYCQICPRGAPFFLNGN</variation>
    <location>
        <begin position="184"/>
        <end position="217"/>
    </location>
</feature>
<feature type="splice variant" id="VSP_024301" description="In isoform 2." evidence="5">
    <location>
        <begin position="218"/>
        <end position="1182"/>
    </location>
</feature>
<organism>
    <name type="scientific">Mus musculus</name>
    <name type="common">Mouse</name>
    <dbReference type="NCBI Taxonomy" id="10090"/>
    <lineage>
        <taxon>Eukaryota</taxon>
        <taxon>Metazoa</taxon>
        <taxon>Chordata</taxon>
        <taxon>Craniata</taxon>
        <taxon>Vertebrata</taxon>
        <taxon>Euteleostomi</taxon>
        <taxon>Mammalia</taxon>
        <taxon>Eutheria</taxon>
        <taxon>Euarchontoglires</taxon>
        <taxon>Glires</taxon>
        <taxon>Rodentia</taxon>
        <taxon>Myomorpha</taxon>
        <taxon>Muroidea</taxon>
        <taxon>Muridae</taxon>
        <taxon>Murinae</taxon>
        <taxon>Mus</taxon>
        <taxon>Mus</taxon>
    </lineage>
</organism>
<comment type="function">
    <text evidence="1">GTPase activator for the Rho-type GTPases by converting them to an inactive GDP-bound state.</text>
</comment>
<comment type="alternative products">
    <event type="alternative splicing"/>
    <isoform>
        <id>Q6IFT4-1</id>
        <name>1</name>
        <sequence type="displayed"/>
    </isoform>
    <isoform>
        <id>Q6IFT4-2</id>
        <name>2</name>
        <sequence type="described" ref="VSP_024300 VSP_024301"/>
    </isoform>
</comment>
<sequence>MEAMSPQQDALGAQPGRSSSLTGMSRIAGGPGTKKKMKTLAERRRSAPSLILDKALQKRPSTRDSHSASIDTCAFLSSFMCSSRTLLIDGPVELKRGLQRQERHLFLFNDLFVSAKIKYNNNFKIKNKIRLTDMWTASCVEEVGEGNMNAQKSFVLGWPTVNFVATFSSPEQKDKWLSLLQRYIALEKEKDYPKSIPLKIFAKDIGNCAYFKTITVMNSDTASEVINMSLQMLGITGSERDYQLWVNSGKEAAPYPLIGHEYPYGIKMSHLRDTALLTQGSRDSASPSQLQEPFLMEQLPREMQCQFILKPTRLATAQQLSDSSQKTFKRRRSIINWAFWRGSSTHLDNLPMSPTSPMPGQLFGVSLPDLCENDNLPKPILDMLSFLNQKGPLTKGIFRQSANMKSCRELKEKLNSGIEVHLDCESIFVIASVLKDFLRNIPESIFSSDLYDHWVCVMDQGNDEEKINIIQRLLDQLPRANVVFLRYLFGVLHNIEQHSLSNQMTAFNLAVCIAPSILWPPASSSPELENEFTKKVSLLIQFLIENCCRVFGEEIASLLGELSERSDREHTPDITCFQMNDSSYDSLENELNEEADAPCSDLVKKLGQGSRSMDSVLTLSDYDLEQPEVEGLLTLSNFDLDQSKEEHIPIKPPLEPKPVNVFVGYRKVSLGEHARAPAGPGTLSCLPVAAADAPKVLRRHRRSSEPSIDYLDTKLSYLREFYQKKLRKSSCDAVLSRKDEDYLKQTQPQKKGDKVCLKQSSVTGTDVSKRNTANENIKKKSLSGHEGTQVTLFTKSKPVPISVASYSHGSSQDHPRKQAFDADPCRFSPPHLTDAQKSSRVQHRRCSEPSIDDQNYKLSYLRGIYSMKQNKASCEAGLLHGEDDYLRRHKSLQIEGQKLINQSLVMGIEVGKSSSSHQSTEKVLPPRLNLCPRASYSSLSSPGSSPSGSSVSSQDSAFSQISEHSVFTPTETSSPIDCTFQTQRKQEELSSDFDSPSRLSGMPGPSMGQASSHLAYLRKGTTEQPSQMHSVTLHPSAWLRSGLVTLKNWSLKKKTKAARPEDRKVCSLKEPLELPSCASGTPEADSLQESQDDLQGDEGPGQTACGFSSYACQDSEQHAGSPFHLAESRLKPCMKLYKGEESGGQYPCDNPWEGASSSLETTEDTANPGAEPTTFAMTGTDI</sequence>
<dbReference type="EMBL" id="AK040756">
    <property type="protein sequence ID" value="BAC30694.1"/>
    <property type="molecule type" value="mRNA"/>
</dbReference>
<dbReference type="EMBL" id="AK046916">
    <property type="protein sequence ID" value="BAC32919.1"/>
    <property type="molecule type" value="mRNA"/>
</dbReference>
<dbReference type="EMBL" id="AK129345">
    <property type="protein sequence ID" value="BAC98155.1"/>
    <property type="molecule type" value="mRNA"/>
</dbReference>
<dbReference type="EMBL" id="BK004077">
    <property type="protein sequence ID" value="DAA04568.1"/>
    <property type="molecule type" value="mRNA"/>
</dbReference>
<dbReference type="CCDS" id="CCDS23177.1">
    <molecule id="Q6IFT4-1"/>
</dbReference>
<dbReference type="RefSeq" id="NP_780744.2">
    <molecule id="Q6IFT4-1"/>
    <property type="nucleotide sequence ID" value="NM_175535.3"/>
</dbReference>
<dbReference type="SMR" id="Q6IFT4"/>
<dbReference type="FunCoup" id="Q6IFT4">
    <property type="interactions" value="731"/>
</dbReference>
<dbReference type="STRING" id="10090.ENSMUSP00000065633"/>
<dbReference type="iPTMnet" id="Q6IFT4"/>
<dbReference type="PhosphoSitePlus" id="Q6IFT4"/>
<dbReference type="PaxDb" id="10090-ENSMUSP00000065633"/>
<dbReference type="ProteomicsDB" id="255204">
    <molecule id="Q6IFT4-1"/>
</dbReference>
<dbReference type="ProteomicsDB" id="255205">
    <molecule id="Q6IFT4-2"/>
</dbReference>
<dbReference type="Antibodypedia" id="32015">
    <property type="antibodies" value="125 antibodies from 27 providers"/>
</dbReference>
<dbReference type="DNASU" id="244867"/>
<dbReference type="Ensembl" id="ENSMUST00000065496.12">
    <molecule id="Q6IFT4-1"/>
    <property type="protein sequence ID" value="ENSMUSP00000065633.6"/>
    <property type="gene ID" value="ENSMUSG00000053199.14"/>
</dbReference>
<dbReference type="GeneID" id="244867"/>
<dbReference type="KEGG" id="mmu:244867"/>
<dbReference type="UCSC" id="uc009pli.1">
    <molecule id="Q6IFT4-2"/>
    <property type="organism name" value="mouse"/>
</dbReference>
<dbReference type="UCSC" id="uc009plj.1">
    <molecule id="Q6IFT4-1"/>
    <property type="organism name" value="mouse"/>
</dbReference>
<dbReference type="AGR" id="MGI:2445175"/>
<dbReference type="CTD" id="57569"/>
<dbReference type="MGI" id="MGI:2445175">
    <property type="gene designation" value="Arhgap20"/>
</dbReference>
<dbReference type="VEuPathDB" id="HostDB:ENSMUSG00000053199"/>
<dbReference type="eggNOG" id="KOG4724">
    <property type="taxonomic scope" value="Eukaryota"/>
</dbReference>
<dbReference type="GeneTree" id="ENSGT00940000154633"/>
<dbReference type="HOGENOM" id="CLU_008526_0_0_1"/>
<dbReference type="InParanoid" id="Q6IFT4"/>
<dbReference type="OMA" id="IDDQHCK"/>
<dbReference type="OrthoDB" id="9994905at2759"/>
<dbReference type="PhylomeDB" id="Q6IFT4"/>
<dbReference type="TreeFam" id="TF331062"/>
<dbReference type="Reactome" id="R-MMU-8980692">
    <property type="pathway name" value="RHOA GTPase cycle"/>
</dbReference>
<dbReference type="Reactome" id="R-MMU-9013148">
    <property type="pathway name" value="CDC42 GTPase cycle"/>
</dbReference>
<dbReference type="Reactome" id="R-MMU-9013149">
    <property type="pathway name" value="RAC1 GTPase cycle"/>
</dbReference>
<dbReference type="BioGRID-ORCS" id="244867">
    <property type="hits" value="1 hit in 59 CRISPR screens"/>
</dbReference>
<dbReference type="ChiTaRS" id="Arhgap20">
    <property type="organism name" value="mouse"/>
</dbReference>
<dbReference type="PRO" id="PR:Q6IFT4"/>
<dbReference type="Proteomes" id="UP000000589">
    <property type="component" value="Chromosome 9"/>
</dbReference>
<dbReference type="RNAct" id="Q6IFT4">
    <property type="molecule type" value="protein"/>
</dbReference>
<dbReference type="Bgee" id="ENSMUSG00000053199">
    <property type="expression patterns" value="Expressed in animal zygote and 190 other cell types or tissues"/>
</dbReference>
<dbReference type="ExpressionAtlas" id="Q6IFT4">
    <property type="expression patterns" value="baseline and differential"/>
</dbReference>
<dbReference type="GO" id="GO:0005096">
    <property type="term" value="F:GTPase activator activity"/>
    <property type="evidence" value="ECO:0007669"/>
    <property type="project" value="UniProtKB-KW"/>
</dbReference>
<dbReference type="GO" id="GO:0035023">
    <property type="term" value="P:regulation of Rho protein signal transduction"/>
    <property type="evidence" value="ECO:0007669"/>
    <property type="project" value="InterPro"/>
</dbReference>
<dbReference type="GO" id="GO:0007165">
    <property type="term" value="P:signal transduction"/>
    <property type="evidence" value="ECO:0007669"/>
    <property type="project" value="InterPro"/>
</dbReference>
<dbReference type="CDD" id="cd13319">
    <property type="entry name" value="PH_RARhoGAP"/>
    <property type="match status" value="1"/>
</dbReference>
<dbReference type="CDD" id="cd17115">
    <property type="entry name" value="RA_RHG20"/>
    <property type="match status" value="1"/>
</dbReference>
<dbReference type="CDD" id="cd04402">
    <property type="entry name" value="RhoGAP_ARHGAP20"/>
    <property type="match status" value="1"/>
</dbReference>
<dbReference type="FunFam" id="2.30.29.30:FF:000217">
    <property type="entry name" value="Rho GTPase activating protein 20"/>
    <property type="match status" value="1"/>
</dbReference>
<dbReference type="FunFam" id="1.10.555.10:FF:000025">
    <property type="entry name" value="Rho GTPase-activating protein 20"/>
    <property type="match status" value="1"/>
</dbReference>
<dbReference type="Gene3D" id="2.30.29.30">
    <property type="entry name" value="Pleckstrin-homology domain (PH domain)/Phosphotyrosine-binding domain (PTB)"/>
    <property type="match status" value="1"/>
</dbReference>
<dbReference type="Gene3D" id="1.10.555.10">
    <property type="entry name" value="Rho GTPase activation protein"/>
    <property type="match status" value="1"/>
</dbReference>
<dbReference type="InterPro" id="IPR047886">
    <property type="entry name" value="ARHGAP20-like_RhoGAP"/>
</dbReference>
<dbReference type="InterPro" id="IPR047887">
    <property type="entry name" value="ARHGAP20_PH"/>
</dbReference>
<dbReference type="InterPro" id="IPR047888">
    <property type="entry name" value="ARHGAP20_RA"/>
</dbReference>
<dbReference type="InterPro" id="IPR011993">
    <property type="entry name" value="PH-like_dom_sf"/>
</dbReference>
<dbReference type="InterPro" id="IPR001849">
    <property type="entry name" value="PH_domain"/>
</dbReference>
<dbReference type="InterPro" id="IPR000159">
    <property type="entry name" value="RA_dom"/>
</dbReference>
<dbReference type="InterPro" id="IPR008936">
    <property type="entry name" value="Rho_GTPase_activation_prot"/>
</dbReference>
<dbReference type="InterPro" id="IPR000198">
    <property type="entry name" value="RhoGAP_dom"/>
</dbReference>
<dbReference type="InterPro" id="IPR029071">
    <property type="entry name" value="Ubiquitin-like_domsf"/>
</dbReference>
<dbReference type="PANTHER" id="PTHR23179:SF28">
    <property type="entry name" value="RHO GTPASE-ACTIVATING PROTEIN 20"/>
    <property type="match status" value="1"/>
</dbReference>
<dbReference type="PANTHER" id="PTHR23179">
    <property type="entry name" value="T-CELL ACTIVATION RHO GTPASE ACTIVATING PROTEIN-RELATED"/>
    <property type="match status" value="1"/>
</dbReference>
<dbReference type="Pfam" id="PF00788">
    <property type="entry name" value="RA"/>
    <property type="match status" value="1"/>
</dbReference>
<dbReference type="Pfam" id="PF22286">
    <property type="entry name" value="RHG20_PH"/>
    <property type="match status" value="1"/>
</dbReference>
<dbReference type="Pfam" id="PF00620">
    <property type="entry name" value="RhoGAP"/>
    <property type="match status" value="1"/>
</dbReference>
<dbReference type="SMART" id="SM00233">
    <property type="entry name" value="PH"/>
    <property type="match status" value="1"/>
</dbReference>
<dbReference type="SMART" id="SM00324">
    <property type="entry name" value="RhoGAP"/>
    <property type="match status" value="1"/>
</dbReference>
<dbReference type="SUPFAM" id="SSF48350">
    <property type="entry name" value="GTPase activation domain, GAP"/>
    <property type="match status" value="1"/>
</dbReference>
<dbReference type="SUPFAM" id="SSF50729">
    <property type="entry name" value="PH domain-like"/>
    <property type="match status" value="1"/>
</dbReference>
<dbReference type="SUPFAM" id="SSF54236">
    <property type="entry name" value="Ubiquitin-like"/>
    <property type="match status" value="1"/>
</dbReference>
<dbReference type="PROSITE" id="PS50200">
    <property type="entry name" value="RA"/>
    <property type="match status" value="1"/>
</dbReference>
<dbReference type="PROSITE" id="PS50238">
    <property type="entry name" value="RHOGAP"/>
    <property type="match status" value="1"/>
</dbReference>
<keyword id="KW-0025">Alternative splicing</keyword>
<keyword id="KW-0343">GTPase activation</keyword>
<keyword id="KW-0597">Phosphoprotein</keyword>
<keyword id="KW-1185">Reference proteome</keyword>
<accession>Q6IFT4</accession>
<accession>Q6ZPS4</accession>
<accession>Q8BLZ7</accession>
<accession>Q8BXI4</accession>
<reference key="1">
    <citation type="journal article" date="2005" name="Science">
        <title>The transcriptional landscape of the mammalian genome.</title>
        <authorList>
            <person name="Carninci P."/>
            <person name="Kasukawa T."/>
            <person name="Katayama S."/>
            <person name="Gough J."/>
            <person name="Frith M.C."/>
            <person name="Maeda N."/>
            <person name="Oyama R."/>
            <person name="Ravasi T."/>
            <person name="Lenhard B."/>
            <person name="Wells C."/>
            <person name="Kodzius R."/>
            <person name="Shimokawa K."/>
            <person name="Bajic V.B."/>
            <person name="Brenner S.E."/>
            <person name="Batalov S."/>
            <person name="Forrest A.R."/>
            <person name="Zavolan M."/>
            <person name="Davis M.J."/>
            <person name="Wilming L.G."/>
            <person name="Aidinis V."/>
            <person name="Allen J.E."/>
            <person name="Ambesi-Impiombato A."/>
            <person name="Apweiler R."/>
            <person name="Aturaliya R.N."/>
            <person name="Bailey T.L."/>
            <person name="Bansal M."/>
            <person name="Baxter L."/>
            <person name="Beisel K.W."/>
            <person name="Bersano T."/>
            <person name="Bono H."/>
            <person name="Chalk A.M."/>
            <person name="Chiu K.P."/>
            <person name="Choudhary V."/>
            <person name="Christoffels A."/>
            <person name="Clutterbuck D.R."/>
            <person name="Crowe M.L."/>
            <person name="Dalla E."/>
            <person name="Dalrymple B.P."/>
            <person name="de Bono B."/>
            <person name="Della Gatta G."/>
            <person name="di Bernardo D."/>
            <person name="Down T."/>
            <person name="Engstrom P."/>
            <person name="Fagiolini M."/>
            <person name="Faulkner G."/>
            <person name="Fletcher C.F."/>
            <person name="Fukushima T."/>
            <person name="Furuno M."/>
            <person name="Futaki S."/>
            <person name="Gariboldi M."/>
            <person name="Georgii-Hemming P."/>
            <person name="Gingeras T.R."/>
            <person name="Gojobori T."/>
            <person name="Green R.E."/>
            <person name="Gustincich S."/>
            <person name="Harbers M."/>
            <person name="Hayashi Y."/>
            <person name="Hensch T.K."/>
            <person name="Hirokawa N."/>
            <person name="Hill D."/>
            <person name="Huminiecki L."/>
            <person name="Iacono M."/>
            <person name="Ikeo K."/>
            <person name="Iwama A."/>
            <person name="Ishikawa T."/>
            <person name="Jakt M."/>
            <person name="Kanapin A."/>
            <person name="Katoh M."/>
            <person name="Kawasawa Y."/>
            <person name="Kelso J."/>
            <person name="Kitamura H."/>
            <person name="Kitano H."/>
            <person name="Kollias G."/>
            <person name="Krishnan S.P."/>
            <person name="Kruger A."/>
            <person name="Kummerfeld S.K."/>
            <person name="Kurochkin I.V."/>
            <person name="Lareau L.F."/>
            <person name="Lazarevic D."/>
            <person name="Lipovich L."/>
            <person name="Liu J."/>
            <person name="Liuni S."/>
            <person name="McWilliam S."/>
            <person name="Madan Babu M."/>
            <person name="Madera M."/>
            <person name="Marchionni L."/>
            <person name="Matsuda H."/>
            <person name="Matsuzawa S."/>
            <person name="Miki H."/>
            <person name="Mignone F."/>
            <person name="Miyake S."/>
            <person name="Morris K."/>
            <person name="Mottagui-Tabar S."/>
            <person name="Mulder N."/>
            <person name="Nakano N."/>
            <person name="Nakauchi H."/>
            <person name="Ng P."/>
            <person name="Nilsson R."/>
            <person name="Nishiguchi S."/>
            <person name="Nishikawa S."/>
            <person name="Nori F."/>
            <person name="Ohara O."/>
            <person name="Okazaki Y."/>
            <person name="Orlando V."/>
            <person name="Pang K.C."/>
            <person name="Pavan W.J."/>
            <person name="Pavesi G."/>
            <person name="Pesole G."/>
            <person name="Petrovsky N."/>
            <person name="Piazza S."/>
            <person name="Reed J."/>
            <person name="Reid J.F."/>
            <person name="Ring B.Z."/>
            <person name="Ringwald M."/>
            <person name="Rost B."/>
            <person name="Ruan Y."/>
            <person name="Salzberg S.L."/>
            <person name="Sandelin A."/>
            <person name="Schneider C."/>
            <person name="Schoenbach C."/>
            <person name="Sekiguchi K."/>
            <person name="Semple C.A."/>
            <person name="Seno S."/>
            <person name="Sessa L."/>
            <person name="Sheng Y."/>
            <person name="Shibata Y."/>
            <person name="Shimada H."/>
            <person name="Shimada K."/>
            <person name="Silva D."/>
            <person name="Sinclair B."/>
            <person name="Sperling S."/>
            <person name="Stupka E."/>
            <person name="Sugiura K."/>
            <person name="Sultana R."/>
            <person name="Takenaka Y."/>
            <person name="Taki K."/>
            <person name="Tammoja K."/>
            <person name="Tan S.L."/>
            <person name="Tang S."/>
            <person name="Taylor M.S."/>
            <person name="Tegner J."/>
            <person name="Teichmann S.A."/>
            <person name="Ueda H.R."/>
            <person name="van Nimwegen E."/>
            <person name="Verardo R."/>
            <person name="Wei C.L."/>
            <person name="Yagi K."/>
            <person name="Yamanishi H."/>
            <person name="Zabarovsky E."/>
            <person name="Zhu S."/>
            <person name="Zimmer A."/>
            <person name="Hide W."/>
            <person name="Bult C."/>
            <person name="Grimmond S.M."/>
            <person name="Teasdale R.D."/>
            <person name="Liu E.T."/>
            <person name="Brusic V."/>
            <person name="Quackenbush J."/>
            <person name="Wahlestedt C."/>
            <person name="Mattick J.S."/>
            <person name="Hume D.A."/>
            <person name="Kai C."/>
            <person name="Sasaki D."/>
            <person name="Tomaru Y."/>
            <person name="Fukuda S."/>
            <person name="Kanamori-Katayama M."/>
            <person name="Suzuki M."/>
            <person name="Aoki J."/>
            <person name="Arakawa T."/>
            <person name="Iida J."/>
            <person name="Imamura K."/>
            <person name="Itoh M."/>
            <person name="Kato T."/>
            <person name="Kawaji H."/>
            <person name="Kawagashira N."/>
            <person name="Kawashima T."/>
            <person name="Kojima M."/>
            <person name="Kondo S."/>
            <person name="Konno H."/>
            <person name="Nakano K."/>
            <person name="Ninomiya N."/>
            <person name="Nishio T."/>
            <person name="Okada M."/>
            <person name="Plessy C."/>
            <person name="Shibata K."/>
            <person name="Shiraki T."/>
            <person name="Suzuki S."/>
            <person name="Tagami M."/>
            <person name="Waki K."/>
            <person name="Watahiki A."/>
            <person name="Okamura-Oho Y."/>
            <person name="Suzuki H."/>
            <person name="Kawai J."/>
            <person name="Hayashizaki Y."/>
        </authorList>
    </citation>
    <scope>NUCLEOTIDE SEQUENCE [LARGE SCALE MRNA] (ISOFORM 2)</scope>
    <scope>NUCLEOTIDE SEQUENCE [LARGE SCALE MRNA] OF 1-388 (ISOFORM 1)</scope>
    <source>
        <strain>C57BL/6J</strain>
        <tissue>Aorta</tissue>
        <tissue>Cerebellum</tissue>
        <tissue>Vein</tissue>
    </source>
</reference>
<reference key="2">
    <citation type="journal article" date="2003" name="DNA Res.">
        <title>Prediction of the coding sequences of mouse homologues of KIAA gene: III. The complete nucleotide sequences of 500 mouse KIAA-homologous cDNAs identified by screening of terminal sequences of cDNA clones randomly sampled from size-fractionated libraries.</title>
        <authorList>
            <person name="Okazaki N."/>
            <person name="Kikuno R."/>
            <person name="Ohara R."/>
            <person name="Inamoto S."/>
            <person name="Koseki H."/>
            <person name="Hiraoka S."/>
            <person name="Saga Y."/>
            <person name="Nagase T."/>
            <person name="Ohara O."/>
            <person name="Koga H."/>
        </authorList>
    </citation>
    <scope>NUCLEOTIDE SEQUENCE [MRNA] OF 120-1182 (ISOFORM 1)</scope>
    <source>
        <tissue>Brain</tissue>
    </source>
</reference>
<reference key="3">
    <citation type="journal article" date="2004" name="Genomics">
        <title>Identification of RARhoGAP, a novel putative RhoGAP gene expressed in male germ cells.</title>
        <authorList>
            <person name="Curry B.J."/>
            <person name="Su H."/>
            <person name="Law E.G."/>
            <person name="McLaughlin E.A."/>
            <person name="Nixon B."/>
            <person name="Aitken R.J."/>
        </authorList>
    </citation>
    <scope>IDENTIFICATION</scope>
</reference>
<reference key="4">
    <citation type="journal article" date="2003" name="Int. J. Oncol.">
        <title>Identification and characterization of human KIAA1391 and mouse Kiaa1391 genes encoding novel RhoGAP family proteins with RA domain and ANXL repeats.</title>
        <authorList>
            <person name="Katoh M."/>
            <person name="Katoh M."/>
        </authorList>
    </citation>
    <scope>IDENTIFICATION</scope>
</reference>
<reference key="5">
    <citation type="journal article" date="2010" name="Cell">
        <title>A tissue-specific atlas of mouse protein phosphorylation and expression.</title>
        <authorList>
            <person name="Huttlin E.L."/>
            <person name="Jedrychowski M.P."/>
            <person name="Elias J.E."/>
            <person name="Goswami T."/>
            <person name="Rad R."/>
            <person name="Beausoleil S.A."/>
            <person name="Villen J."/>
            <person name="Haas W."/>
            <person name="Sowa M.E."/>
            <person name="Gygi S.P."/>
        </authorList>
    </citation>
    <scope>PHOSPHORYLATION [LARGE SCALE ANALYSIS] AT SER-46; SER-704 AND SER-730</scope>
    <scope>IDENTIFICATION BY MASS SPECTROMETRY [LARGE SCALE ANALYSIS]</scope>
    <source>
        <tissue>Brain</tissue>
        <tissue>Testis</tissue>
    </source>
</reference>
<proteinExistence type="evidence at protein level"/>
<evidence type="ECO:0000250" key="1"/>
<evidence type="ECO:0000255" key="2">
    <source>
        <dbReference type="PROSITE-ProRule" id="PRU00166"/>
    </source>
</evidence>
<evidence type="ECO:0000255" key="3">
    <source>
        <dbReference type="PROSITE-ProRule" id="PRU00172"/>
    </source>
</evidence>
<evidence type="ECO:0000256" key="4">
    <source>
        <dbReference type="SAM" id="MobiDB-lite"/>
    </source>
</evidence>
<evidence type="ECO:0000303" key="5">
    <source>
    </source>
</evidence>
<evidence type="ECO:0007744" key="6">
    <source>
    </source>
</evidence>
<name>RHG20_MOUSE</name>
<gene>
    <name type="primary">Arhgap20</name>
    <name type="synonym">Kiaa1391</name>
</gene>